<evidence type="ECO:0000255" key="1">
    <source>
        <dbReference type="HAMAP-Rule" id="MF_01041"/>
    </source>
</evidence>
<reference key="1">
    <citation type="journal article" date="2001" name="Science">
        <title>Complete genome sequence of a virulent isolate of Streptococcus pneumoniae.</title>
        <authorList>
            <person name="Tettelin H."/>
            <person name="Nelson K.E."/>
            <person name="Paulsen I.T."/>
            <person name="Eisen J.A."/>
            <person name="Read T.D."/>
            <person name="Peterson S.N."/>
            <person name="Heidelberg J.F."/>
            <person name="DeBoy R.T."/>
            <person name="Haft D.H."/>
            <person name="Dodson R.J."/>
            <person name="Durkin A.S."/>
            <person name="Gwinn M.L."/>
            <person name="Kolonay J.F."/>
            <person name="Nelson W.C."/>
            <person name="Peterson J.D."/>
            <person name="Umayam L.A."/>
            <person name="White O."/>
            <person name="Salzberg S.L."/>
            <person name="Lewis M.R."/>
            <person name="Radune D."/>
            <person name="Holtzapple E.K."/>
            <person name="Khouri H.M."/>
            <person name="Wolf A.M."/>
            <person name="Utterback T.R."/>
            <person name="Hansen C.L."/>
            <person name="McDonald L.A."/>
            <person name="Feldblyum T.V."/>
            <person name="Angiuoli S.V."/>
            <person name="Dickinson T."/>
            <person name="Hickey E.K."/>
            <person name="Holt I.E."/>
            <person name="Loftus B.J."/>
            <person name="Yang F."/>
            <person name="Smith H.O."/>
            <person name="Venter J.C."/>
            <person name="Dougherty B.A."/>
            <person name="Morrison D.A."/>
            <person name="Hollingshead S.K."/>
            <person name="Fraser C.M."/>
        </authorList>
    </citation>
    <scope>NUCLEOTIDE SEQUENCE [LARGE SCALE GENOMIC DNA]</scope>
    <source>
        <strain>ATCC BAA-334 / TIGR4</strain>
    </source>
</reference>
<keyword id="KW-1185">Reference proteome</keyword>
<accession>P67361</accession>
<accession>Q97Q27</accession>
<protein>
    <recommendedName>
        <fullName evidence="1">UPF0223 protein SP_1404</fullName>
    </recommendedName>
</protein>
<organism>
    <name type="scientific">Streptococcus pneumoniae serotype 4 (strain ATCC BAA-334 / TIGR4)</name>
    <dbReference type="NCBI Taxonomy" id="170187"/>
    <lineage>
        <taxon>Bacteria</taxon>
        <taxon>Bacillati</taxon>
        <taxon>Bacillota</taxon>
        <taxon>Bacilli</taxon>
        <taxon>Lactobacillales</taxon>
        <taxon>Streptococcaceae</taxon>
        <taxon>Streptococcus</taxon>
    </lineage>
</organism>
<comment type="similarity">
    <text evidence="1">Belongs to the UPF0223 family.</text>
</comment>
<dbReference type="EMBL" id="AE005672">
    <property type="protein sequence ID" value="AAK75502.1"/>
    <property type="molecule type" value="Genomic_DNA"/>
</dbReference>
<dbReference type="PIR" id="E95163">
    <property type="entry name" value="E95163"/>
</dbReference>
<dbReference type="RefSeq" id="WP_001041974.1">
    <property type="nucleotide sequence ID" value="NZ_CP155539.1"/>
</dbReference>
<dbReference type="SMR" id="P67361"/>
<dbReference type="PaxDb" id="170187-SP_1404"/>
<dbReference type="EnsemblBacteria" id="AAK75502">
    <property type="protein sequence ID" value="AAK75502"/>
    <property type="gene ID" value="SP_1404"/>
</dbReference>
<dbReference type="KEGG" id="spn:SP_1404"/>
<dbReference type="eggNOG" id="COG4476">
    <property type="taxonomic scope" value="Bacteria"/>
</dbReference>
<dbReference type="PhylomeDB" id="P67361"/>
<dbReference type="BioCyc" id="SPNE170187:G1FZB-1412-MONOMER"/>
<dbReference type="Proteomes" id="UP000000585">
    <property type="component" value="Chromosome"/>
</dbReference>
<dbReference type="Gene3D" id="1.10.220.80">
    <property type="entry name" value="BH2638-like"/>
    <property type="match status" value="1"/>
</dbReference>
<dbReference type="HAMAP" id="MF_01041">
    <property type="entry name" value="UPF0223"/>
    <property type="match status" value="1"/>
</dbReference>
<dbReference type="InterPro" id="IPR023324">
    <property type="entry name" value="BH2638-like_sf"/>
</dbReference>
<dbReference type="InterPro" id="IPR007920">
    <property type="entry name" value="UPF0223"/>
</dbReference>
<dbReference type="NCBIfam" id="NF003353">
    <property type="entry name" value="PRK04387.1"/>
    <property type="match status" value="1"/>
</dbReference>
<dbReference type="Pfam" id="PF05256">
    <property type="entry name" value="UPF0223"/>
    <property type="match status" value="1"/>
</dbReference>
<dbReference type="PIRSF" id="PIRSF037260">
    <property type="entry name" value="UPF0223"/>
    <property type="match status" value="1"/>
</dbReference>
<dbReference type="SUPFAM" id="SSF158504">
    <property type="entry name" value="BH2638-like"/>
    <property type="match status" value="1"/>
</dbReference>
<proteinExistence type="inferred from homology"/>
<name>Y1404_STRPN</name>
<feature type="chain" id="PRO_0000216696" description="UPF0223 protein SP_1404">
    <location>
        <begin position="1"/>
        <end position="92"/>
    </location>
</feature>
<sequence length="92" mass="10308">MNKQYSYPLDLSWSTEELASVLSFFNDVEAAYEGKVEAKKLLDSYKGFKAVVPSKSEEKRLGREFETVSGYSLYRAVQAAKEKGEGKISLGK</sequence>
<gene>
    <name type="ordered locus">SP_1404</name>
</gene>